<gene>
    <name evidence="1" type="primary">clpX</name>
    <name type="ordered locus">lpp1828</name>
</gene>
<proteinExistence type="inferred from homology"/>
<reference key="1">
    <citation type="journal article" date="2004" name="Nat. Genet.">
        <title>Evidence in the Legionella pneumophila genome for exploitation of host cell functions and high genome plasticity.</title>
        <authorList>
            <person name="Cazalet C."/>
            <person name="Rusniok C."/>
            <person name="Brueggemann H."/>
            <person name="Zidane N."/>
            <person name="Magnier A."/>
            <person name="Ma L."/>
            <person name="Tichit M."/>
            <person name="Jarraud S."/>
            <person name="Bouchier C."/>
            <person name="Vandenesch F."/>
            <person name="Kunst F."/>
            <person name="Etienne J."/>
            <person name="Glaser P."/>
            <person name="Buchrieser C."/>
        </authorList>
    </citation>
    <scope>NUCLEOTIDE SEQUENCE [LARGE SCALE GENOMIC DNA]</scope>
    <source>
        <strain>Paris</strain>
    </source>
</reference>
<accession>Q5X452</accession>
<evidence type="ECO:0000255" key="1">
    <source>
        <dbReference type="HAMAP-Rule" id="MF_00175"/>
    </source>
</evidence>
<evidence type="ECO:0000255" key="2">
    <source>
        <dbReference type="PROSITE-ProRule" id="PRU01250"/>
    </source>
</evidence>
<comment type="function">
    <text evidence="1">ATP-dependent specificity component of the Clp protease. It directs the protease to specific substrates. Can perform chaperone functions in the absence of ClpP.</text>
</comment>
<comment type="subunit">
    <text evidence="1">Component of the ClpX-ClpP complex. Forms a hexameric ring that, in the presence of ATP, binds to fourteen ClpP subunits assembled into a disk-like structure with a central cavity, resembling the structure of eukaryotic proteasomes.</text>
</comment>
<comment type="similarity">
    <text evidence="1">Belongs to the ClpX chaperone family.</text>
</comment>
<keyword id="KW-0067">ATP-binding</keyword>
<keyword id="KW-0143">Chaperone</keyword>
<keyword id="KW-0479">Metal-binding</keyword>
<keyword id="KW-0547">Nucleotide-binding</keyword>
<keyword id="KW-0862">Zinc</keyword>
<protein>
    <recommendedName>
        <fullName evidence="1">ATP-dependent Clp protease ATP-binding subunit ClpX</fullName>
    </recommendedName>
</protein>
<feature type="chain" id="PRO_0000160372" description="ATP-dependent Clp protease ATP-binding subunit ClpX">
    <location>
        <begin position="1"/>
        <end position="424"/>
    </location>
</feature>
<feature type="domain" description="ClpX-type ZB" evidence="2">
    <location>
        <begin position="1"/>
        <end position="56"/>
    </location>
</feature>
<feature type="binding site" evidence="2">
    <location>
        <position position="15"/>
    </location>
    <ligand>
        <name>Zn(2+)</name>
        <dbReference type="ChEBI" id="CHEBI:29105"/>
    </ligand>
</feature>
<feature type="binding site" evidence="2">
    <location>
        <position position="18"/>
    </location>
    <ligand>
        <name>Zn(2+)</name>
        <dbReference type="ChEBI" id="CHEBI:29105"/>
    </ligand>
</feature>
<feature type="binding site" evidence="2">
    <location>
        <position position="37"/>
    </location>
    <ligand>
        <name>Zn(2+)</name>
        <dbReference type="ChEBI" id="CHEBI:29105"/>
    </ligand>
</feature>
<feature type="binding site" evidence="2">
    <location>
        <position position="40"/>
    </location>
    <ligand>
        <name>Zn(2+)</name>
        <dbReference type="ChEBI" id="CHEBI:29105"/>
    </ligand>
</feature>
<feature type="binding site" evidence="1">
    <location>
        <begin position="118"/>
        <end position="125"/>
    </location>
    <ligand>
        <name>ATP</name>
        <dbReference type="ChEBI" id="CHEBI:30616"/>
    </ligand>
</feature>
<name>CLPX_LEGPA</name>
<organism>
    <name type="scientific">Legionella pneumophila (strain Paris)</name>
    <dbReference type="NCBI Taxonomy" id="297246"/>
    <lineage>
        <taxon>Bacteria</taxon>
        <taxon>Pseudomonadati</taxon>
        <taxon>Pseudomonadota</taxon>
        <taxon>Gammaproteobacteria</taxon>
        <taxon>Legionellales</taxon>
        <taxon>Legionellaceae</taxon>
        <taxon>Legionella</taxon>
    </lineage>
</organism>
<dbReference type="EMBL" id="CR628336">
    <property type="protein sequence ID" value="CAH12980.1"/>
    <property type="molecule type" value="Genomic_DNA"/>
</dbReference>
<dbReference type="RefSeq" id="WP_011214113.1">
    <property type="nucleotide sequence ID" value="NC_006368.1"/>
</dbReference>
<dbReference type="SMR" id="Q5X452"/>
<dbReference type="KEGG" id="lpp:lpp1828"/>
<dbReference type="LegioList" id="lpp1828"/>
<dbReference type="HOGENOM" id="CLU_014218_8_2_6"/>
<dbReference type="GO" id="GO:0009376">
    <property type="term" value="C:HslUV protease complex"/>
    <property type="evidence" value="ECO:0007669"/>
    <property type="project" value="TreeGrafter"/>
</dbReference>
<dbReference type="GO" id="GO:0005524">
    <property type="term" value="F:ATP binding"/>
    <property type="evidence" value="ECO:0007669"/>
    <property type="project" value="UniProtKB-UniRule"/>
</dbReference>
<dbReference type="GO" id="GO:0016887">
    <property type="term" value="F:ATP hydrolysis activity"/>
    <property type="evidence" value="ECO:0007669"/>
    <property type="project" value="InterPro"/>
</dbReference>
<dbReference type="GO" id="GO:0140662">
    <property type="term" value="F:ATP-dependent protein folding chaperone"/>
    <property type="evidence" value="ECO:0007669"/>
    <property type="project" value="InterPro"/>
</dbReference>
<dbReference type="GO" id="GO:0046983">
    <property type="term" value="F:protein dimerization activity"/>
    <property type="evidence" value="ECO:0007669"/>
    <property type="project" value="InterPro"/>
</dbReference>
<dbReference type="GO" id="GO:0051082">
    <property type="term" value="F:unfolded protein binding"/>
    <property type="evidence" value="ECO:0007669"/>
    <property type="project" value="UniProtKB-UniRule"/>
</dbReference>
<dbReference type="GO" id="GO:0008270">
    <property type="term" value="F:zinc ion binding"/>
    <property type="evidence" value="ECO:0007669"/>
    <property type="project" value="InterPro"/>
</dbReference>
<dbReference type="GO" id="GO:0051301">
    <property type="term" value="P:cell division"/>
    <property type="evidence" value="ECO:0007669"/>
    <property type="project" value="TreeGrafter"/>
</dbReference>
<dbReference type="GO" id="GO:0051603">
    <property type="term" value="P:proteolysis involved in protein catabolic process"/>
    <property type="evidence" value="ECO:0007669"/>
    <property type="project" value="TreeGrafter"/>
</dbReference>
<dbReference type="CDD" id="cd19497">
    <property type="entry name" value="RecA-like_ClpX"/>
    <property type="match status" value="1"/>
</dbReference>
<dbReference type="FunFam" id="1.10.8.60:FF:000002">
    <property type="entry name" value="ATP-dependent Clp protease ATP-binding subunit ClpX"/>
    <property type="match status" value="1"/>
</dbReference>
<dbReference type="FunFam" id="3.40.50.300:FF:000005">
    <property type="entry name" value="ATP-dependent Clp protease ATP-binding subunit ClpX"/>
    <property type="match status" value="1"/>
</dbReference>
<dbReference type="Gene3D" id="1.10.8.60">
    <property type="match status" value="1"/>
</dbReference>
<dbReference type="Gene3D" id="6.20.220.10">
    <property type="entry name" value="ClpX chaperone, C4-type zinc finger domain"/>
    <property type="match status" value="1"/>
</dbReference>
<dbReference type="Gene3D" id="3.40.50.300">
    <property type="entry name" value="P-loop containing nucleotide triphosphate hydrolases"/>
    <property type="match status" value="1"/>
</dbReference>
<dbReference type="HAMAP" id="MF_00175">
    <property type="entry name" value="ClpX"/>
    <property type="match status" value="1"/>
</dbReference>
<dbReference type="InterPro" id="IPR003593">
    <property type="entry name" value="AAA+_ATPase"/>
</dbReference>
<dbReference type="InterPro" id="IPR050052">
    <property type="entry name" value="ATP-dep_Clp_protease_ClpX"/>
</dbReference>
<dbReference type="InterPro" id="IPR003959">
    <property type="entry name" value="ATPase_AAA_core"/>
</dbReference>
<dbReference type="InterPro" id="IPR019489">
    <property type="entry name" value="Clp_ATPase_C"/>
</dbReference>
<dbReference type="InterPro" id="IPR004487">
    <property type="entry name" value="Clp_protease_ATP-bd_su_ClpX"/>
</dbReference>
<dbReference type="InterPro" id="IPR046425">
    <property type="entry name" value="ClpX_bact"/>
</dbReference>
<dbReference type="InterPro" id="IPR027417">
    <property type="entry name" value="P-loop_NTPase"/>
</dbReference>
<dbReference type="InterPro" id="IPR010603">
    <property type="entry name" value="Znf_CppX_C4"/>
</dbReference>
<dbReference type="InterPro" id="IPR038366">
    <property type="entry name" value="Znf_CppX_C4_sf"/>
</dbReference>
<dbReference type="NCBIfam" id="TIGR00382">
    <property type="entry name" value="clpX"/>
    <property type="match status" value="1"/>
</dbReference>
<dbReference type="NCBIfam" id="NF003745">
    <property type="entry name" value="PRK05342.1"/>
    <property type="match status" value="1"/>
</dbReference>
<dbReference type="PANTHER" id="PTHR48102:SF7">
    <property type="entry name" value="ATP-DEPENDENT CLP PROTEASE ATP-BINDING SUBUNIT CLPX-LIKE, MITOCHONDRIAL"/>
    <property type="match status" value="1"/>
</dbReference>
<dbReference type="PANTHER" id="PTHR48102">
    <property type="entry name" value="ATP-DEPENDENT CLP PROTEASE ATP-BINDING SUBUNIT CLPX-LIKE, MITOCHONDRIAL-RELATED"/>
    <property type="match status" value="1"/>
</dbReference>
<dbReference type="Pfam" id="PF07724">
    <property type="entry name" value="AAA_2"/>
    <property type="match status" value="1"/>
</dbReference>
<dbReference type="Pfam" id="PF10431">
    <property type="entry name" value="ClpB_D2-small"/>
    <property type="match status" value="1"/>
</dbReference>
<dbReference type="Pfam" id="PF06689">
    <property type="entry name" value="zf-C4_ClpX"/>
    <property type="match status" value="1"/>
</dbReference>
<dbReference type="SMART" id="SM00382">
    <property type="entry name" value="AAA"/>
    <property type="match status" value="1"/>
</dbReference>
<dbReference type="SMART" id="SM01086">
    <property type="entry name" value="ClpB_D2-small"/>
    <property type="match status" value="1"/>
</dbReference>
<dbReference type="SMART" id="SM00994">
    <property type="entry name" value="zf-C4_ClpX"/>
    <property type="match status" value="1"/>
</dbReference>
<dbReference type="SUPFAM" id="SSF57716">
    <property type="entry name" value="Glucocorticoid receptor-like (DNA-binding domain)"/>
    <property type="match status" value="1"/>
</dbReference>
<dbReference type="SUPFAM" id="SSF52540">
    <property type="entry name" value="P-loop containing nucleoside triphosphate hydrolases"/>
    <property type="match status" value="1"/>
</dbReference>
<dbReference type="PROSITE" id="PS51902">
    <property type="entry name" value="CLPX_ZB"/>
    <property type="match status" value="1"/>
</dbReference>
<sequence>MSKSGNGNGDKVLYCSFCGKSQHEVKKLIAGPSVFVCDECVELCNDIIREETHETHEETEARLPTPKEISNFLDEYVIGQQHAKKVLSVAVYNHYKRLQHKSEDGVELGKSNILLIGPTGSGKTLLAQTLARILNVPFAMADATTLTEAGYVGEDVENIIQKLLQKCDYDVDKAQQGIVYIDEIDKISRKSDNPSITRDVSGEGVQQALLKLIEGTVASVPPQGGRKHPQQEFLQVDTSNILFICGGAFAGLDKVIRERSDKSSIGFSAQLKSKKSSNDEASKVLGQLESDDLIKYGLIPEFVGRLPVVTTLQELDEAALIDILTRPKNALTKQFQSLFKMEGSELEFRDEALIAIAKKALERKMGARGLRSILENILLDTMYDLPSLEGVNKIVIDESVVNGLSKPILIYEQDEKKSASGSKD</sequence>